<reference key="1">
    <citation type="journal article" date="2008" name="Genomics">
        <title>Characterization of ST-4821 complex, a unique Neisseria meningitidis clone.</title>
        <authorList>
            <person name="Peng J."/>
            <person name="Yang L."/>
            <person name="Yang F."/>
            <person name="Yang J."/>
            <person name="Yan Y."/>
            <person name="Nie H."/>
            <person name="Zhang X."/>
            <person name="Xiong Z."/>
            <person name="Jiang Y."/>
            <person name="Cheng F."/>
            <person name="Xu X."/>
            <person name="Chen S."/>
            <person name="Sun L."/>
            <person name="Li W."/>
            <person name="Shen Y."/>
            <person name="Shao Z."/>
            <person name="Liang X."/>
            <person name="Xu J."/>
            <person name="Jin Q."/>
        </authorList>
    </citation>
    <scope>NUCLEOTIDE SEQUENCE [LARGE SCALE GENOMIC DNA]</scope>
    <source>
        <strain>053442</strain>
    </source>
</reference>
<proteinExistence type="inferred from homology"/>
<keyword id="KW-0489">Methyltransferase</keyword>
<keyword id="KW-0949">S-adenosyl-L-methionine</keyword>
<keyword id="KW-0808">Transferase</keyword>
<keyword id="KW-0819">tRNA processing</keyword>
<dbReference type="EC" id="2.1.1.-" evidence="1"/>
<dbReference type="EC" id="2.1.1.35" evidence="1"/>
<dbReference type="EMBL" id="CP000381">
    <property type="protein sequence ID" value="ABX73740.1"/>
    <property type="status" value="ALT_INIT"/>
    <property type="molecule type" value="Genomic_DNA"/>
</dbReference>
<dbReference type="RefSeq" id="WP_002220458.1">
    <property type="nucleotide sequence ID" value="NC_010120.1"/>
</dbReference>
<dbReference type="SMR" id="A9M1Q1"/>
<dbReference type="KEGG" id="nmn:NMCC_1592"/>
<dbReference type="HOGENOM" id="CLU_043022_0_0_4"/>
<dbReference type="Proteomes" id="UP000001177">
    <property type="component" value="Chromosome"/>
</dbReference>
<dbReference type="GO" id="GO:0005829">
    <property type="term" value="C:cytosol"/>
    <property type="evidence" value="ECO:0007669"/>
    <property type="project" value="TreeGrafter"/>
</dbReference>
<dbReference type="GO" id="GO:0019843">
    <property type="term" value="F:rRNA binding"/>
    <property type="evidence" value="ECO:0007669"/>
    <property type="project" value="TreeGrafter"/>
</dbReference>
<dbReference type="GO" id="GO:0030697">
    <property type="term" value="F:tRNA (uracil(54)-C5)-methyltransferase activity, S-adenosyl methionine-dependent"/>
    <property type="evidence" value="ECO:0007669"/>
    <property type="project" value="UniProtKB-UniRule"/>
</dbReference>
<dbReference type="GO" id="GO:0000049">
    <property type="term" value="F:tRNA binding"/>
    <property type="evidence" value="ECO:0007669"/>
    <property type="project" value="TreeGrafter"/>
</dbReference>
<dbReference type="GO" id="GO:0030488">
    <property type="term" value="P:tRNA methylation"/>
    <property type="evidence" value="ECO:0007669"/>
    <property type="project" value="UniProtKB-UniRule"/>
</dbReference>
<dbReference type="CDD" id="cd02440">
    <property type="entry name" value="AdoMet_MTases"/>
    <property type="match status" value="1"/>
</dbReference>
<dbReference type="FunFam" id="2.40.50.1070:FF:000001">
    <property type="entry name" value="tRNA/tmRNA (uracil-C(5))-methyltransferase"/>
    <property type="match status" value="1"/>
</dbReference>
<dbReference type="FunFam" id="3.40.50.150:FF:000012">
    <property type="entry name" value="tRNA/tmRNA (uracil-C(5))-methyltransferase"/>
    <property type="match status" value="1"/>
</dbReference>
<dbReference type="Gene3D" id="2.40.50.1070">
    <property type="match status" value="1"/>
</dbReference>
<dbReference type="Gene3D" id="3.40.50.150">
    <property type="entry name" value="Vaccinia Virus protein VP39"/>
    <property type="match status" value="1"/>
</dbReference>
<dbReference type="HAMAP" id="MF_01011">
    <property type="entry name" value="RNA_methyltr_TrmA"/>
    <property type="match status" value="1"/>
</dbReference>
<dbReference type="InterPro" id="IPR030390">
    <property type="entry name" value="MeTrfase_TrmA_AS"/>
</dbReference>
<dbReference type="InterPro" id="IPR029063">
    <property type="entry name" value="SAM-dependent_MTases_sf"/>
</dbReference>
<dbReference type="InterPro" id="IPR011869">
    <property type="entry name" value="TrmA_MeTrfase"/>
</dbReference>
<dbReference type="InterPro" id="IPR010280">
    <property type="entry name" value="U5_MeTrfase_fam"/>
</dbReference>
<dbReference type="NCBIfam" id="TIGR02143">
    <property type="entry name" value="trmA_only"/>
    <property type="match status" value="1"/>
</dbReference>
<dbReference type="PANTHER" id="PTHR47790">
    <property type="entry name" value="TRNA/TMRNA (URACIL-C(5))-METHYLTRANSFERASE"/>
    <property type="match status" value="1"/>
</dbReference>
<dbReference type="PANTHER" id="PTHR47790:SF2">
    <property type="entry name" value="TRNA_TMRNA (URACIL-C(5))-METHYLTRANSFERASE"/>
    <property type="match status" value="1"/>
</dbReference>
<dbReference type="Pfam" id="PF05958">
    <property type="entry name" value="tRNA_U5-meth_tr"/>
    <property type="match status" value="1"/>
</dbReference>
<dbReference type="SUPFAM" id="SSF53335">
    <property type="entry name" value="S-adenosyl-L-methionine-dependent methyltransferases"/>
    <property type="match status" value="1"/>
</dbReference>
<dbReference type="PROSITE" id="PS51687">
    <property type="entry name" value="SAM_MT_RNA_M5U"/>
    <property type="match status" value="1"/>
</dbReference>
<dbReference type="PROSITE" id="PS01230">
    <property type="entry name" value="TRMA_1"/>
    <property type="match status" value="1"/>
</dbReference>
<sequence length="367" mass="41780">MSDYTQQLQDKKDHLKTLFAGLDVPEWEVYESPDKHYRMRAEFRIWHEGGEMFYAMFEKGQKAGGASLIRCDRFEAASEAVNRLMPELIAVAAQSAELRNRWYAVEFLSTLSGEMLVTMIYHKRLDNEWMQAAQALQQQLDISVIGRSRGQKIVLKQDYVTETLKVGNRDFRYRQIEGSFTQPNAAVCQKMLEWACGAAEGLDGDLLELYCGNGNFTLPLSEKFERVLATEISKTSVSAAQWNIEANRIGNIKIARLSAEEFTEAYTGKREFKRLKDGGIALTDYAFSTIFVDPPRAGIDEETLKLVSQFDNIIYISCNPETLRTNLDTLAETHTVERAALFDQFPFTHHIESGVLLKKKILGKSKR</sequence>
<evidence type="ECO:0000255" key="1">
    <source>
        <dbReference type="HAMAP-Rule" id="MF_01011"/>
    </source>
</evidence>
<evidence type="ECO:0000305" key="2"/>
<feature type="chain" id="PRO_0000388559" description="tRNA/tmRNA (uracil-C(5))-methyltransferase">
    <location>
        <begin position="1"/>
        <end position="367"/>
    </location>
</feature>
<feature type="active site" description="Nucleophile" evidence="1">
    <location>
        <position position="318"/>
    </location>
</feature>
<feature type="active site" description="Proton acceptor" evidence="1">
    <location>
        <position position="352"/>
    </location>
</feature>
<feature type="binding site" evidence="1">
    <location>
        <position position="182"/>
    </location>
    <ligand>
        <name>S-adenosyl-L-methionine</name>
        <dbReference type="ChEBI" id="CHEBI:59789"/>
    </ligand>
</feature>
<feature type="binding site" evidence="1">
    <location>
        <position position="210"/>
    </location>
    <ligand>
        <name>S-adenosyl-L-methionine</name>
        <dbReference type="ChEBI" id="CHEBI:59789"/>
    </ligand>
</feature>
<feature type="binding site" evidence="1">
    <location>
        <position position="215"/>
    </location>
    <ligand>
        <name>S-adenosyl-L-methionine</name>
        <dbReference type="ChEBI" id="CHEBI:59789"/>
    </ligand>
</feature>
<feature type="binding site" evidence="1">
    <location>
        <position position="231"/>
    </location>
    <ligand>
        <name>S-adenosyl-L-methionine</name>
        <dbReference type="ChEBI" id="CHEBI:59789"/>
    </ligand>
</feature>
<feature type="binding site" evidence="1">
    <location>
        <position position="293"/>
    </location>
    <ligand>
        <name>S-adenosyl-L-methionine</name>
        <dbReference type="ChEBI" id="CHEBI:59789"/>
    </ligand>
</feature>
<protein>
    <recommendedName>
        <fullName evidence="1">tRNA/tmRNA (uracil-C(5))-methyltransferase</fullName>
        <ecNumber evidence="1">2.1.1.-</ecNumber>
        <ecNumber evidence="1">2.1.1.35</ecNumber>
    </recommendedName>
    <alternativeName>
        <fullName evidence="1">tRNA (uracil(54)-C(5))-methyltransferase</fullName>
    </alternativeName>
    <alternativeName>
        <fullName evidence="1">tRNA(m5U54)-methyltransferase</fullName>
        <shortName evidence="1">RUMT</shortName>
    </alternativeName>
    <alternativeName>
        <fullName evidence="1">tmRNA (uracil(341)-C(5))-methyltransferase</fullName>
    </alternativeName>
</protein>
<accession>A9M1Q1</accession>
<name>TRMA_NEIM0</name>
<comment type="function">
    <text evidence="1">Dual-specificity methyltransferase that catalyzes the formation of 5-methyluridine at position 54 (m5U54) in all tRNAs, and that of position 341 (m5U341) in tmRNA (transfer-mRNA).</text>
</comment>
<comment type="catalytic activity">
    <reaction evidence="1">
        <text>uridine(54) in tRNA + S-adenosyl-L-methionine = 5-methyluridine(54) in tRNA + S-adenosyl-L-homocysteine + H(+)</text>
        <dbReference type="Rhea" id="RHEA:42712"/>
        <dbReference type="Rhea" id="RHEA-COMP:10167"/>
        <dbReference type="Rhea" id="RHEA-COMP:10193"/>
        <dbReference type="ChEBI" id="CHEBI:15378"/>
        <dbReference type="ChEBI" id="CHEBI:57856"/>
        <dbReference type="ChEBI" id="CHEBI:59789"/>
        <dbReference type="ChEBI" id="CHEBI:65315"/>
        <dbReference type="ChEBI" id="CHEBI:74447"/>
        <dbReference type="EC" id="2.1.1.35"/>
    </reaction>
</comment>
<comment type="catalytic activity">
    <reaction evidence="1">
        <text>uridine(341) in tmRNA + S-adenosyl-L-methionine = 5-methyluridine(341) in tmRNA + S-adenosyl-L-homocysteine + H(+)</text>
        <dbReference type="Rhea" id="RHEA:43612"/>
        <dbReference type="Rhea" id="RHEA-COMP:10630"/>
        <dbReference type="Rhea" id="RHEA-COMP:10631"/>
        <dbReference type="ChEBI" id="CHEBI:15378"/>
        <dbReference type="ChEBI" id="CHEBI:57856"/>
        <dbReference type="ChEBI" id="CHEBI:59789"/>
        <dbReference type="ChEBI" id="CHEBI:65315"/>
        <dbReference type="ChEBI" id="CHEBI:74447"/>
    </reaction>
</comment>
<comment type="similarity">
    <text evidence="1">Belongs to the class I-like SAM-binding methyltransferase superfamily. RNA M5U methyltransferase family. TrmA subfamily.</text>
</comment>
<comment type="sequence caution" evidence="2">
    <conflict type="erroneous initiation">
        <sequence resource="EMBL-CDS" id="ABX73740"/>
    </conflict>
    <text>Truncated N-terminus.</text>
</comment>
<gene>
    <name evidence="1" type="primary">trmA</name>
    <name type="ordered locus">NMCC_1592</name>
</gene>
<organism>
    <name type="scientific">Neisseria meningitidis serogroup C (strain 053442)</name>
    <dbReference type="NCBI Taxonomy" id="374833"/>
    <lineage>
        <taxon>Bacteria</taxon>
        <taxon>Pseudomonadati</taxon>
        <taxon>Pseudomonadota</taxon>
        <taxon>Betaproteobacteria</taxon>
        <taxon>Neisseriales</taxon>
        <taxon>Neisseriaceae</taxon>
        <taxon>Neisseria</taxon>
    </lineage>
</organism>